<reference key="1">
    <citation type="journal article" date="2010" name="Genome Biol.">
        <title>Structure and dynamics of the pan-genome of Streptococcus pneumoniae and closely related species.</title>
        <authorList>
            <person name="Donati C."/>
            <person name="Hiller N.L."/>
            <person name="Tettelin H."/>
            <person name="Muzzi A."/>
            <person name="Croucher N.J."/>
            <person name="Angiuoli S.V."/>
            <person name="Oggioni M."/>
            <person name="Dunning Hotopp J.C."/>
            <person name="Hu F.Z."/>
            <person name="Riley D.R."/>
            <person name="Covacci A."/>
            <person name="Mitchell T.J."/>
            <person name="Bentley S.D."/>
            <person name="Kilian M."/>
            <person name="Ehrlich G.D."/>
            <person name="Rappuoli R."/>
            <person name="Moxon E.R."/>
            <person name="Masignani V."/>
        </authorList>
    </citation>
    <scope>NUCLEOTIDE SEQUENCE [LARGE SCALE GENOMIC DNA]</scope>
    <source>
        <strain>Hungary19A-6</strain>
    </source>
</reference>
<gene>
    <name evidence="1" type="primary">rplE</name>
    <name type="ordered locus">SPH_0335</name>
</gene>
<keyword id="KW-0687">Ribonucleoprotein</keyword>
<keyword id="KW-0689">Ribosomal protein</keyword>
<keyword id="KW-0694">RNA-binding</keyword>
<keyword id="KW-0699">rRNA-binding</keyword>
<keyword id="KW-0820">tRNA-binding</keyword>
<accession>B1I8L0</accession>
<evidence type="ECO:0000255" key="1">
    <source>
        <dbReference type="HAMAP-Rule" id="MF_01333"/>
    </source>
</evidence>
<evidence type="ECO:0000305" key="2"/>
<comment type="function">
    <text evidence="1">This is one of the proteins that bind and probably mediate the attachment of the 5S RNA into the large ribosomal subunit, where it forms part of the central protuberance. In the 70S ribosome it contacts protein S13 of the 30S subunit (bridge B1b), connecting the 2 subunits; this bridge is implicated in subunit movement. Contacts the P site tRNA; the 5S rRNA and some of its associated proteins might help stabilize positioning of ribosome-bound tRNAs.</text>
</comment>
<comment type="subunit">
    <text evidence="1">Part of the 50S ribosomal subunit; part of the 5S rRNA/L5/L18/L25 subcomplex. Contacts the 5S rRNA and the P site tRNA. Forms a bridge to the 30S subunit in the 70S ribosome.</text>
</comment>
<comment type="similarity">
    <text evidence="1">Belongs to the universal ribosomal protein uL5 family.</text>
</comment>
<protein>
    <recommendedName>
        <fullName evidence="1">Large ribosomal subunit protein uL5</fullName>
    </recommendedName>
    <alternativeName>
        <fullName evidence="2">50S ribosomal protein L5</fullName>
    </alternativeName>
</protein>
<name>RL5_STRPI</name>
<organism>
    <name type="scientific">Streptococcus pneumoniae (strain Hungary19A-6)</name>
    <dbReference type="NCBI Taxonomy" id="487214"/>
    <lineage>
        <taxon>Bacteria</taxon>
        <taxon>Bacillati</taxon>
        <taxon>Bacillota</taxon>
        <taxon>Bacilli</taxon>
        <taxon>Lactobacillales</taxon>
        <taxon>Streptococcaceae</taxon>
        <taxon>Streptococcus</taxon>
    </lineage>
</organism>
<proteinExistence type="inferred from homology"/>
<sequence length="180" mass="19774">MANRLKEKYLNEVVPALTEQFNYSSVMAVPKVDKIVLNMGVGEAVSNAKSLEKAAEELALISGQKPLITKAKKSIAGFRLREGVAIGAKVTLRGERMYEFLDKLVSVSLPRVRDFHGVPTKSFDGRGNYTLGVKEQLIFPEINFDDVDKTRGLDIVIVTTANTDEESRALLTGLGMPFAK</sequence>
<feature type="chain" id="PRO_1000142458" description="Large ribosomal subunit protein uL5">
    <location>
        <begin position="1"/>
        <end position="180"/>
    </location>
</feature>
<dbReference type="EMBL" id="CP000936">
    <property type="protein sequence ID" value="ACA35907.1"/>
    <property type="molecule type" value="Genomic_DNA"/>
</dbReference>
<dbReference type="RefSeq" id="WP_000013542.1">
    <property type="nucleotide sequence ID" value="NC_010380.1"/>
</dbReference>
<dbReference type="SMR" id="B1I8L0"/>
<dbReference type="GeneID" id="93738969"/>
<dbReference type="KEGG" id="spv:SPH_0335"/>
<dbReference type="HOGENOM" id="CLU_061015_2_1_9"/>
<dbReference type="Proteomes" id="UP000002163">
    <property type="component" value="Chromosome"/>
</dbReference>
<dbReference type="GO" id="GO:1990904">
    <property type="term" value="C:ribonucleoprotein complex"/>
    <property type="evidence" value="ECO:0007669"/>
    <property type="project" value="UniProtKB-KW"/>
</dbReference>
<dbReference type="GO" id="GO:0005840">
    <property type="term" value="C:ribosome"/>
    <property type="evidence" value="ECO:0007669"/>
    <property type="project" value="UniProtKB-KW"/>
</dbReference>
<dbReference type="GO" id="GO:0019843">
    <property type="term" value="F:rRNA binding"/>
    <property type="evidence" value="ECO:0007669"/>
    <property type="project" value="UniProtKB-UniRule"/>
</dbReference>
<dbReference type="GO" id="GO:0003735">
    <property type="term" value="F:structural constituent of ribosome"/>
    <property type="evidence" value="ECO:0007669"/>
    <property type="project" value="InterPro"/>
</dbReference>
<dbReference type="GO" id="GO:0000049">
    <property type="term" value="F:tRNA binding"/>
    <property type="evidence" value="ECO:0007669"/>
    <property type="project" value="UniProtKB-UniRule"/>
</dbReference>
<dbReference type="GO" id="GO:0006412">
    <property type="term" value="P:translation"/>
    <property type="evidence" value="ECO:0007669"/>
    <property type="project" value="UniProtKB-UniRule"/>
</dbReference>
<dbReference type="FunFam" id="3.30.1440.10:FF:000001">
    <property type="entry name" value="50S ribosomal protein L5"/>
    <property type="match status" value="1"/>
</dbReference>
<dbReference type="Gene3D" id="3.30.1440.10">
    <property type="match status" value="1"/>
</dbReference>
<dbReference type="HAMAP" id="MF_01333_B">
    <property type="entry name" value="Ribosomal_uL5_B"/>
    <property type="match status" value="1"/>
</dbReference>
<dbReference type="InterPro" id="IPR002132">
    <property type="entry name" value="Ribosomal_uL5"/>
</dbReference>
<dbReference type="InterPro" id="IPR020930">
    <property type="entry name" value="Ribosomal_uL5_bac-type"/>
</dbReference>
<dbReference type="InterPro" id="IPR031309">
    <property type="entry name" value="Ribosomal_uL5_C"/>
</dbReference>
<dbReference type="InterPro" id="IPR020929">
    <property type="entry name" value="Ribosomal_uL5_CS"/>
</dbReference>
<dbReference type="InterPro" id="IPR022803">
    <property type="entry name" value="Ribosomal_uL5_dom_sf"/>
</dbReference>
<dbReference type="InterPro" id="IPR031310">
    <property type="entry name" value="Ribosomal_uL5_N"/>
</dbReference>
<dbReference type="NCBIfam" id="NF000585">
    <property type="entry name" value="PRK00010.1"/>
    <property type="match status" value="1"/>
</dbReference>
<dbReference type="PANTHER" id="PTHR11994">
    <property type="entry name" value="60S RIBOSOMAL PROTEIN L11-RELATED"/>
    <property type="match status" value="1"/>
</dbReference>
<dbReference type="Pfam" id="PF00281">
    <property type="entry name" value="Ribosomal_L5"/>
    <property type="match status" value="1"/>
</dbReference>
<dbReference type="Pfam" id="PF00673">
    <property type="entry name" value="Ribosomal_L5_C"/>
    <property type="match status" value="1"/>
</dbReference>
<dbReference type="PIRSF" id="PIRSF002161">
    <property type="entry name" value="Ribosomal_L5"/>
    <property type="match status" value="1"/>
</dbReference>
<dbReference type="SUPFAM" id="SSF55282">
    <property type="entry name" value="RL5-like"/>
    <property type="match status" value="1"/>
</dbReference>
<dbReference type="PROSITE" id="PS00358">
    <property type="entry name" value="RIBOSOMAL_L5"/>
    <property type="match status" value="1"/>
</dbReference>